<proteinExistence type="evidence at protein level"/>
<name>NUOI_PARDP</name>
<gene>
    <name evidence="2" type="primary">nuoI</name>
    <name evidence="4" type="synonym">nqo9</name>
    <name type="ordered locus">Pden_2238</name>
</gene>
<protein>
    <recommendedName>
        <fullName evidence="2">NADH-quinone oxidoreductase subunit I</fullName>
        <ecNumber evidence="2">7.1.1.-</ecNumber>
    </recommendedName>
    <alternativeName>
        <fullName>NADH dehydrogenase I subunit 9</fullName>
    </alternativeName>
    <alternativeName>
        <fullName evidence="2">NADH dehydrogenase I subunit I</fullName>
    </alternativeName>
    <alternativeName>
        <fullName>NADH-quinone oxidoreductase subunit 9</fullName>
        <shortName>NQO9</shortName>
    </alternativeName>
    <alternativeName>
        <fullName>NDH-1 subunit 9</fullName>
    </alternativeName>
    <alternativeName>
        <fullName evidence="2">NDH-1 subunit I</fullName>
    </alternativeName>
</protein>
<evidence type="ECO:0000250" key="1"/>
<evidence type="ECO:0000255" key="2">
    <source>
        <dbReference type="HAMAP-Rule" id="MF_01351"/>
    </source>
</evidence>
<evidence type="ECO:0000269" key="3">
    <source>
    </source>
</evidence>
<evidence type="ECO:0000303" key="4">
    <source>
    </source>
</evidence>
<evidence type="ECO:0000305" key="5">
    <source>
    </source>
</evidence>
<evidence type="ECO:0007829" key="6">
    <source>
        <dbReference type="PDB" id="8QBY"/>
    </source>
</evidence>
<sequence length="163" mass="18901">MAFDFARATKYFLMWDFIKGFGLGMRYFVSPKPTLNYPHEKGPLSPRFRGEHALRRYPNGEERCIACKLCEAVCPAQAITIDAEPREDGSRRTTRYDIDMTKCIYCGFCQEACPVDAIVEGPNFEYATETREELFYDKQKLLANGERWEAEIARNLQLDAPYR</sequence>
<keyword id="KW-0002">3D-structure</keyword>
<keyword id="KW-0004">4Fe-4S</keyword>
<keyword id="KW-0997">Cell inner membrane</keyword>
<keyword id="KW-1003">Cell membrane</keyword>
<keyword id="KW-0408">Iron</keyword>
<keyword id="KW-0411">Iron-sulfur</keyword>
<keyword id="KW-0472">Membrane</keyword>
<keyword id="KW-0479">Metal-binding</keyword>
<keyword id="KW-0520">NAD</keyword>
<keyword id="KW-0874">Quinone</keyword>
<keyword id="KW-1185">Reference proteome</keyword>
<keyword id="KW-0677">Repeat</keyword>
<keyword id="KW-1278">Translocase</keyword>
<keyword id="KW-0830">Ubiquinone</keyword>
<comment type="function">
    <text evidence="2 5">NDH-1 shuttles electrons from NADH, via FMN and iron-sulfur (Fe-S) centers, to quinones in the respiratory chain. The immediate electron acceptor for the enzyme in this species is believed to be ubiquinone. Couples the redox reaction to proton translocation (for every two electrons transferred, four hydrogen ions are translocated across the cytoplasmic membrane), and thus conserves the redox energy in a proton gradient.</text>
</comment>
<comment type="catalytic activity">
    <reaction evidence="2">
        <text>a quinone + NADH + 5 H(+)(in) = a quinol + NAD(+) + 4 H(+)(out)</text>
        <dbReference type="Rhea" id="RHEA:57888"/>
        <dbReference type="ChEBI" id="CHEBI:15378"/>
        <dbReference type="ChEBI" id="CHEBI:24646"/>
        <dbReference type="ChEBI" id="CHEBI:57540"/>
        <dbReference type="ChEBI" id="CHEBI:57945"/>
        <dbReference type="ChEBI" id="CHEBI:132124"/>
    </reaction>
</comment>
<comment type="cofactor">
    <cofactor evidence="2">
        <name>[4Fe-4S] cluster</name>
        <dbReference type="ChEBI" id="CHEBI:49883"/>
    </cofactor>
    <text evidence="2">Binds 2 [4Fe-4S] clusters per subunit.</text>
</comment>
<comment type="subunit">
    <text evidence="1 3">NDH-1 is composed of at least 14 different subunits, Nqo1 to Nqo14. The complex has a L-shaped structure, with the hydrophobic arm (subunits Nqo7, Nqo8, Nqo10 to Nqo14) embedded in the inner membrane and the hydrophilic peripheral arm (subunits Nqo1 to Nqo6, Nqo9) protruding into the bacterial cytoplasm. The hydrophilic domain contains all the redox centers (By similarity). NADH-quinone oxidoreductase forms a supercomplex with ubiquinol-cytochrome c reductase complex (complex III or cytochrome b-c1 complex) and cytochrome c oxidase (complex IV), which stabilizes the NADH-quinone oxidoreductase complex (PubMed:14610094).</text>
</comment>
<comment type="subcellular location">
    <subcellularLocation>
        <location evidence="5">Cell inner membrane</location>
        <topology evidence="5">Peripheral membrane protein</topology>
    </subcellularLocation>
</comment>
<comment type="similarity">
    <text evidence="2">Belongs to the complex I 23 kDa subunit family.</text>
</comment>
<accession>A1B486</accession>
<reference key="1">
    <citation type="submission" date="2006-12" db="EMBL/GenBank/DDBJ databases">
        <title>Complete sequence of chromosome 1 of Paracoccus denitrificans PD1222.</title>
        <authorList>
            <person name="Copeland A."/>
            <person name="Lucas S."/>
            <person name="Lapidus A."/>
            <person name="Barry K."/>
            <person name="Detter J.C."/>
            <person name="Glavina del Rio T."/>
            <person name="Hammon N."/>
            <person name="Israni S."/>
            <person name="Dalin E."/>
            <person name="Tice H."/>
            <person name="Pitluck S."/>
            <person name="Munk A.C."/>
            <person name="Brettin T."/>
            <person name="Bruce D."/>
            <person name="Han C."/>
            <person name="Tapia R."/>
            <person name="Gilna P."/>
            <person name="Schmutz J."/>
            <person name="Larimer F."/>
            <person name="Land M."/>
            <person name="Hauser L."/>
            <person name="Kyrpides N."/>
            <person name="Lykidis A."/>
            <person name="Spiro S."/>
            <person name="Richardson D.J."/>
            <person name="Moir J.W.B."/>
            <person name="Ferguson S.J."/>
            <person name="van Spanning R.J.M."/>
            <person name="Richardson P."/>
        </authorList>
    </citation>
    <scope>NUCLEOTIDE SEQUENCE [LARGE SCALE GENOMIC DNA]</scope>
    <source>
        <strain>Pd 1222</strain>
    </source>
</reference>
<reference key="2">
    <citation type="journal article" date="2004" name="J. Biol. Chem.">
        <title>Assembly of respiratory complexes I, III, and IV into NADH oxidase supercomplex stabilizes complex I in Paracoccus denitrificans.</title>
        <authorList>
            <person name="Stroh A."/>
            <person name="Anderka O."/>
            <person name="Pfeiffer K."/>
            <person name="Yagi T."/>
            <person name="Finel M."/>
            <person name="Ludwig B."/>
            <person name="Schagger H."/>
        </authorList>
    </citation>
    <scope>IDENTIFICATION IN NADH OXIDASE SUPERCOMPLEX</scope>
    <scope>FUNCTION</scope>
    <scope>SUBUNIT</scope>
    <scope>SUBCELLULAR LOCATION</scope>
</reference>
<feature type="chain" id="PRO_0000298527" description="NADH-quinone oxidoreductase subunit I">
    <location>
        <begin position="1"/>
        <end position="163"/>
    </location>
</feature>
<feature type="domain" description="4Fe-4S ferredoxin-type 1" evidence="2">
    <location>
        <begin position="54"/>
        <end position="84"/>
    </location>
</feature>
<feature type="domain" description="4Fe-4S ferredoxin-type 2" evidence="2">
    <location>
        <begin position="94"/>
        <end position="123"/>
    </location>
</feature>
<feature type="binding site" evidence="2">
    <location>
        <position position="64"/>
    </location>
    <ligand>
        <name>[4Fe-4S] cluster</name>
        <dbReference type="ChEBI" id="CHEBI:49883"/>
        <label>1</label>
    </ligand>
</feature>
<feature type="binding site" evidence="2">
    <location>
        <position position="67"/>
    </location>
    <ligand>
        <name>[4Fe-4S] cluster</name>
        <dbReference type="ChEBI" id="CHEBI:49883"/>
        <label>1</label>
    </ligand>
</feature>
<feature type="binding site" evidence="2">
    <location>
        <position position="70"/>
    </location>
    <ligand>
        <name>[4Fe-4S] cluster</name>
        <dbReference type="ChEBI" id="CHEBI:49883"/>
        <label>1</label>
    </ligand>
</feature>
<feature type="binding site" evidence="2">
    <location>
        <position position="74"/>
    </location>
    <ligand>
        <name>[4Fe-4S] cluster</name>
        <dbReference type="ChEBI" id="CHEBI:49883"/>
        <label>2</label>
    </ligand>
</feature>
<feature type="binding site" evidence="2">
    <location>
        <position position="103"/>
    </location>
    <ligand>
        <name>[4Fe-4S] cluster</name>
        <dbReference type="ChEBI" id="CHEBI:49883"/>
        <label>2</label>
    </ligand>
</feature>
<feature type="binding site" evidence="2">
    <location>
        <position position="106"/>
    </location>
    <ligand>
        <name>[4Fe-4S] cluster</name>
        <dbReference type="ChEBI" id="CHEBI:49883"/>
        <label>2</label>
    </ligand>
</feature>
<feature type="binding site" evidence="2">
    <location>
        <position position="109"/>
    </location>
    <ligand>
        <name>[4Fe-4S] cluster</name>
        <dbReference type="ChEBI" id="CHEBI:49883"/>
        <label>2</label>
    </ligand>
</feature>
<feature type="binding site" evidence="2">
    <location>
        <position position="113"/>
    </location>
    <ligand>
        <name>[4Fe-4S] cluster</name>
        <dbReference type="ChEBI" id="CHEBI:49883"/>
        <label>1</label>
    </ligand>
</feature>
<feature type="helix" evidence="6">
    <location>
        <begin position="6"/>
        <end position="12"/>
    </location>
</feature>
<feature type="helix" evidence="6">
    <location>
        <begin position="15"/>
        <end position="28"/>
    </location>
</feature>
<feature type="turn" evidence="6">
    <location>
        <begin position="37"/>
        <end position="39"/>
    </location>
</feature>
<feature type="strand" evidence="6">
    <location>
        <begin position="51"/>
        <end position="54"/>
    </location>
</feature>
<feature type="helix" evidence="6">
    <location>
        <begin position="69"/>
        <end position="73"/>
    </location>
</feature>
<feature type="strand" evidence="6">
    <location>
        <begin position="79"/>
        <end position="85"/>
    </location>
</feature>
<feature type="strand" evidence="6">
    <location>
        <begin position="91"/>
        <end position="99"/>
    </location>
</feature>
<feature type="turn" evidence="6">
    <location>
        <begin position="100"/>
        <end position="102"/>
    </location>
</feature>
<feature type="helix" evidence="6">
    <location>
        <begin position="108"/>
        <end position="112"/>
    </location>
</feature>
<feature type="strand" evidence="6">
    <location>
        <begin position="114"/>
        <end position="116"/>
    </location>
</feature>
<feature type="strand" evidence="6">
    <location>
        <begin position="118"/>
        <end position="120"/>
    </location>
</feature>
<feature type="strand" evidence="6">
    <location>
        <begin position="128"/>
        <end position="130"/>
    </location>
</feature>
<feature type="helix" evidence="6">
    <location>
        <begin position="131"/>
        <end position="134"/>
    </location>
</feature>
<feature type="helix" evidence="6">
    <location>
        <begin position="138"/>
        <end position="159"/>
    </location>
</feature>
<feature type="helix" evidence="6">
    <location>
        <begin position="160"/>
        <end position="162"/>
    </location>
</feature>
<organism>
    <name type="scientific">Paracoccus denitrificans (strain Pd 1222)</name>
    <dbReference type="NCBI Taxonomy" id="318586"/>
    <lineage>
        <taxon>Bacteria</taxon>
        <taxon>Pseudomonadati</taxon>
        <taxon>Pseudomonadota</taxon>
        <taxon>Alphaproteobacteria</taxon>
        <taxon>Rhodobacterales</taxon>
        <taxon>Paracoccaceae</taxon>
        <taxon>Paracoccus</taxon>
    </lineage>
</organism>
<dbReference type="EC" id="7.1.1.-" evidence="2"/>
<dbReference type="EMBL" id="CP000489">
    <property type="protein sequence ID" value="ABL70330.1"/>
    <property type="molecule type" value="Genomic_DNA"/>
</dbReference>
<dbReference type="RefSeq" id="WP_011748524.1">
    <property type="nucleotide sequence ID" value="NC_008686.1"/>
</dbReference>
<dbReference type="PDB" id="8QBY">
    <property type="method" value="EM"/>
    <property type="resolution" value="2.30 A"/>
    <property type="chains" value="I=1-163"/>
</dbReference>
<dbReference type="PDBsum" id="8QBY"/>
<dbReference type="EMDB" id="EMD-18324"/>
<dbReference type="SMR" id="A1B486"/>
<dbReference type="STRING" id="318586.Pden_2238"/>
<dbReference type="EnsemblBacteria" id="ABL70330">
    <property type="protein sequence ID" value="ABL70330"/>
    <property type="gene ID" value="Pden_2238"/>
</dbReference>
<dbReference type="GeneID" id="93450636"/>
<dbReference type="KEGG" id="pde:Pden_2238"/>
<dbReference type="eggNOG" id="COG1143">
    <property type="taxonomic scope" value="Bacteria"/>
</dbReference>
<dbReference type="HOGENOM" id="CLU_067218_5_1_5"/>
<dbReference type="OrthoDB" id="9808559at2"/>
<dbReference type="Proteomes" id="UP000000361">
    <property type="component" value="Chromosome 1"/>
</dbReference>
<dbReference type="GO" id="GO:0005886">
    <property type="term" value="C:plasma membrane"/>
    <property type="evidence" value="ECO:0007669"/>
    <property type="project" value="UniProtKB-SubCell"/>
</dbReference>
<dbReference type="GO" id="GO:0051539">
    <property type="term" value="F:4 iron, 4 sulfur cluster binding"/>
    <property type="evidence" value="ECO:0007669"/>
    <property type="project" value="UniProtKB-KW"/>
</dbReference>
<dbReference type="GO" id="GO:0005506">
    <property type="term" value="F:iron ion binding"/>
    <property type="evidence" value="ECO:0007669"/>
    <property type="project" value="UniProtKB-UniRule"/>
</dbReference>
<dbReference type="GO" id="GO:0050136">
    <property type="term" value="F:NADH:ubiquinone reductase (non-electrogenic) activity"/>
    <property type="evidence" value="ECO:0007669"/>
    <property type="project" value="UniProtKB-UniRule"/>
</dbReference>
<dbReference type="GO" id="GO:0048038">
    <property type="term" value="F:quinone binding"/>
    <property type="evidence" value="ECO:0007669"/>
    <property type="project" value="UniProtKB-KW"/>
</dbReference>
<dbReference type="GO" id="GO:0009060">
    <property type="term" value="P:aerobic respiration"/>
    <property type="evidence" value="ECO:0007669"/>
    <property type="project" value="TreeGrafter"/>
</dbReference>
<dbReference type="FunFam" id="3.30.70.3270:FF:000001">
    <property type="entry name" value="NADH-quinone oxidoreductase subunit I 1"/>
    <property type="match status" value="1"/>
</dbReference>
<dbReference type="Gene3D" id="3.30.70.3270">
    <property type="match status" value="1"/>
</dbReference>
<dbReference type="HAMAP" id="MF_01351">
    <property type="entry name" value="NDH1_NuoI"/>
    <property type="match status" value="1"/>
</dbReference>
<dbReference type="InterPro" id="IPR017896">
    <property type="entry name" value="4Fe4S_Fe-S-bd"/>
</dbReference>
<dbReference type="InterPro" id="IPR017900">
    <property type="entry name" value="4Fe4S_Fe_S_CS"/>
</dbReference>
<dbReference type="InterPro" id="IPR010226">
    <property type="entry name" value="NADH_quinone_OxRdtase_chainI"/>
</dbReference>
<dbReference type="NCBIfam" id="TIGR01971">
    <property type="entry name" value="NuoI"/>
    <property type="match status" value="1"/>
</dbReference>
<dbReference type="NCBIfam" id="NF004538">
    <property type="entry name" value="PRK05888.1-4"/>
    <property type="match status" value="1"/>
</dbReference>
<dbReference type="NCBIfam" id="NF004539">
    <property type="entry name" value="PRK05888.1-5"/>
    <property type="match status" value="1"/>
</dbReference>
<dbReference type="PANTHER" id="PTHR10849:SF20">
    <property type="entry name" value="NADH DEHYDROGENASE [UBIQUINONE] IRON-SULFUR PROTEIN 8, MITOCHONDRIAL"/>
    <property type="match status" value="1"/>
</dbReference>
<dbReference type="PANTHER" id="PTHR10849">
    <property type="entry name" value="NADH DEHYDROGENASE UBIQUINONE IRON-SULFUR PROTEIN 8, MITOCHONDRIAL"/>
    <property type="match status" value="1"/>
</dbReference>
<dbReference type="Pfam" id="PF12838">
    <property type="entry name" value="Fer4_7"/>
    <property type="match status" value="1"/>
</dbReference>
<dbReference type="SUPFAM" id="SSF54862">
    <property type="entry name" value="4Fe-4S ferredoxins"/>
    <property type="match status" value="1"/>
</dbReference>
<dbReference type="PROSITE" id="PS00198">
    <property type="entry name" value="4FE4S_FER_1"/>
    <property type="match status" value="2"/>
</dbReference>
<dbReference type="PROSITE" id="PS51379">
    <property type="entry name" value="4FE4S_FER_2"/>
    <property type="match status" value="2"/>
</dbReference>